<keyword id="KW-0002">3D-structure</keyword>
<keyword id="KW-0997">Cell inner membrane</keyword>
<keyword id="KW-1003">Cell membrane</keyword>
<keyword id="KW-0446">Lipid-binding</keyword>
<keyword id="KW-0472">Membrane</keyword>
<keyword id="KW-1185">Reference proteome</keyword>
<protein>
    <recommendedName>
        <fullName evidence="1">Membrane-associated protein Vipp1</fullName>
    </recommendedName>
    <alternativeName>
        <fullName>Vesicle-inducing protein in plastids 1</fullName>
        <shortName evidence="4">Vipp1</shortName>
    </alternativeName>
</protein>
<comment type="function">
    <text evidence="1 3 5">A membrane remodeling protein capable of forming rings and/or filaments on membranes, which then curve and tubulate the bilayer (Probable) (PubMed:34166615). Rings will form on liposomes, altering their positive curvature so the lipid bilayer is remodeled into a negative curve as the membrane enters the ring (PubMed:34166615). Ring stacks of varying lengths can be seen joining isolated liposomes (PubMed:34166615). A lipid monolayer can be drawn into the center of the rings (PubMed:34166615). Required for thylakoid formation (By similarity).</text>
</comment>
<comment type="subunit">
    <text evidence="3">Polymerizes to form rings, filaments and ribbons (PubMed:34166615). Rings are formed by stacked rungs that tilt to give a dome-shaped curvature. Rings form with symmetries ranging from C11 (55 subunits) to C17 (119 subunits) (PubMed:34166615).</text>
</comment>
<comment type="subcellular location">
    <subcellularLocation>
        <location evidence="1">Cell inner membrane</location>
        <topology evidence="1">Peripheral membrane protein</topology>
    </subcellularLocation>
    <text evidence="1">Protein is not associated with thylakoids.</text>
</comment>
<comment type="domain">
    <text evidence="3">A helical hairpin is formed by residues 25-137 which is conserved in all known ESCRT-III proteins. Helix 5N-5C (residues 193-217) contacts the helical hairpin 3 subunits away and is essential for oligomerization. The C-terminal flexible linker and alpha-helix 6 (residues 220-256) are not required for oligomerization and do not resolve in electron microscopy.</text>
</comment>
<comment type="similarity">
    <text evidence="5">Belongs to the PspA/Vipp/IM30 family.</text>
</comment>
<proteinExistence type="evidence at protein level"/>
<organism>
    <name type="scientific">Nostoc punctiforme (strain ATCC 29133 / PCC 73102)</name>
    <dbReference type="NCBI Taxonomy" id="63737"/>
    <lineage>
        <taxon>Bacteria</taxon>
        <taxon>Bacillati</taxon>
        <taxon>Cyanobacteriota</taxon>
        <taxon>Cyanophyceae</taxon>
        <taxon>Nostocales</taxon>
        <taxon>Nostocaceae</taxon>
        <taxon>Nostoc</taxon>
    </lineage>
</organism>
<name>VIPP1_NOSP7</name>
<reference evidence="6" key="1">
    <citation type="journal article" date="2013" name="Plant Physiol.">
        <title>A Nostoc punctiforme Sugar Transporter Necessary to Establish a Cyanobacterium-Plant Symbiosis.</title>
        <authorList>
            <person name="Ekman M."/>
            <person name="Picossi S."/>
            <person name="Campbell E.L."/>
            <person name="Meeks J.C."/>
            <person name="Flores E."/>
        </authorList>
    </citation>
    <scope>NUCLEOTIDE SEQUENCE [LARGE SCALE GENOMIC DNA]</scope>
    <source>
        <strain>ATCC 29133 / PCC 73102</strain>
    </source>
</reference>
<reference evidence="7 8 9 10 11 12 13" key="2">
    <citation type="journal article" date="2021" name="Cell">
        <title>Bacterial Vipp1 and PspA are members of the ancient ESCRT-III membrane-remodeling superfamily.</title>
        <authorList>
            <person name="Liu J."/>
            <person name="Tassinari M."/>
            <person name="Souza D.P."/>
            <person name="Naskar S."/>
            <person name="Noel J.K."/>
            <person name="Bohuszewicz O."/>
            <person name="Buck M."/>
            <person name="Williams T.A."/>
            <person name="Baum B."/>
            <person name="Low H.H."/>
        </authorList>
    </citation>
    <scope>STRUCTURE BY ELECTRON MICROSCOPY (6.50 ANGSTROMS)</scope>
    <scope>FUNCTION</scope>
    <scope>LIPSOME-BINDING</scope>
    <scope>SUBUNIT</scope>
    <scope>DOMAIN</scope>
    <scope>MUTAGENESIS OF 192-ASP--LEU-258; 197-PHE--LEU-200 AND 220-PRO--LEU-258</scope>
    <source>
        <strain>ATCC 29133 / PCC 73102</strain>
    </source>
</reference>
<accession>B2J6D9</accession>
<sequence length="258" mass="28711">MGLFDRIKRVVSSNLNDLVNKAEDPEKMLEQAILEMQEDLVQLRQGVAQAIAAQKRSEKQYNDAQNEINKWQRNAQLALQKGDENLARQALERKKTYTDTSAALKASLDTQSTQVETLKRNLIQLESKISEAKTKKEMLKARITTAKAQEQLQGMVRGMNTSSAMSAFERMEEKVLMQESRAQALGELAGADLETQFAQLEGGSDVDDELAALKAQMLPPATPVTQAQLPPQQETTPAKSNEVVDAELDSLRKQLDQL</sequence>
<gene>
    <name evidence="4" type="primary">vipp1</name>
    <name evidence="6" type="ordered locus">Npun_R3963</name>
</gene>
<feature type="chain" id="PRO_0000459581" description="Membrane-associated protein Vipp1">
    <location>
        <begin position="1"/>
        <end position="258"/>
    </location>
</feature>
<feature type="region of interest" description="Disordered" evidence="2">
    <location>
        <begin position="217"/>
        <end position="258"/>
    </location>
</feature>
<feature type="compositionally biased region" description="Polar residues" evidence="2">
    <location>
        <begin position="223"/>
        <end position="239"/>
    </location>
</feature>
<feature type="compositionally biased region" description="Basic and acidic residues" evidence="2">
    <location>
        <begin position="249"/>
        <end position="258"/>
    </location>
</feature>
<feature type="mutagenesis site" description="Abolishes ring and filament formation." evidence="3">
    <location>
        <begin position="192"/>
        <end position="258"/>
    </location>
</feature>
<feature type="mutagenesis site" description="Forms fewer rings and filaments with uniform diameter, loss of tilting during oligomerization." evidence="3">
    <original>FAQL</original>
    <variation>KAQK</variation>
    <location>
        <begin position="197"/>
        <end position="200"/>
    </location>
</feature>
<feature type="mutagenesis site" description="Wild-type ring and filament formation." evidence="3">
    <location>
        <begin position="220"/>
        <end position="258"/>
    </location>
</feature>
<evidence type="ECO:0000250" key="1">
    <source>
        <dbReference type="UniProtKB" id="Q55707"/>
    </source>
</evidence>
<evidence type="ECO:0000256" key="2">
    <source>
        <dbReference type="SAM" id="MobiDB-lite"/>
    </source>
</evidence>
<evidence type="ECO:0000269" key="3">
    <source>
    </source>
</evidence>
<evidence type="ECO:0000303" key="4">
    <source>
    </source>
</evidence>
<evidence type="ECO:0000305" key="5">
    <source>
    </source>
</evidence>
<evidence type="ECO:0000312" key="6">
    <source>
        <dbReference type="EMBL" id="ACC82344.1"/>
    </source>
</evidence>
<evidence type="ECO:0000312" key="7">
    <source>
        <dbReference type="PDB" id="6ZVT"/>
    </source>
</evidence>
<evidence type="ECO:0000312" key="8">
    <source>
        <dbReference type="PDB" id="6ZW4"/>
    </source>
</evidence>
<evidence type="ECO:0000312" key="9">
    <source>
        <dbReference type="PDB" id="6ZW5"/>
    </source>
</evidence>
<evidence type="ECO:0000312" key="10">
    <source>
        <dbReference type="PDB" id="6ZW6"/>
    </source>
</evidence>
<evidence type="ECO:0000312" key="11">
    <source>
        <dbReference type="PDB" id="6ZW7"/>
    </source>
</evidence>
<evidence type="ECO:0007744" key="12">
    <source>
        <dbReference type="PDB" id="6ZVR"/>
    </source>
</evidence>
<evidence type="ECO:0007744" key="13">
    <source>
        <dbReference type="PDB" id="6ZVS"/>
    </source>
</evidence>
<dbReference type="EMBL" id="CP001037">
    <property type="protein sequence ID" value="ACC82344.1"/>
    <property type="molecule type" value="Genomic_DNA"/>
</dbReference>
<dbReference type="RefSeq" id="WP_012410312.1">
    <property type="nucleotide sequence ID" value="NC_010628.1"/>
</dbReference>
<dbReference type="PDB" id="6ZVR">
    <property type="method" value="EM"/>
    <property type="resolution" value="8.20 A"/>
    <property type="chains" value="A/AA/AB/B/BA/BB/C/CA/CB/D/DA/DB/E/EA/F/FA/G/GA/H/HA/I/IA/J/JA/K/KA/L/LA/M/MA=1-258"/>
</dbReference>
<dbReference type="PDB" id="6ZVS">
    <property type="method" value="EM"/>
    <property type="resolution" value="7.20 A"/>
    <property type="chains" value="A/AA/AB/B/BA/BB/C/CA/CB/D/DA/DB/E/EA/EB/F/FA/FB/G/GA/GB/H/HA/HB/I/IA/IB/J/JA/JB=1-258"/>
</dbReference>
<dbReference type="PDB" id="6ZVT">
    <property type="method" value="EM"/>
    <property type="resolution" value="7.00 A"/>
    <property type="chains" value="A/AA/AB/AC/B/BA/BB/C/CA/CB/D/DA/DB/E/EA/EB/F/FA/FB/G/GA/GB/H/HA/HB/I/IA/IB/J/JA=1-258"/>
</dbReference>
<dbReference type="PDB" id="6ZW4">
    <property type="method" value="EM"/>
    <property type="resolution" value="6.50 A"/>
    <property type="chains" value="A/AA/AB/AC/B/BA/BB/BC/C/CA/CB/CC/D/DA/DB/DC/E/EA/EB/EC/F/FA/FB/FC/G/GA/GB/GC/H/HA=1-258"/>
</dbReference>
<dbReference type="PDB" id="6ZW5">
    <property type="method" value="EM"/>
    <property type="resolution" value="7.00 A"/>
    <property type="chains" value="A/AA/AB/AC/B/BA/BB/BC/C/CA/CB/CC/D/DA/DB/DC/E/EA/EB/EC/F/FA/FB/FC/G/GA/GB/GC/H/HA=1-258"/>
</dbReference>
<dbReference type="PDB" id="6ZW6">
    <property type="method" value="EM"/>
    <property type="resolution" value="7.40 A"/>
    <property type="chains" value="A/AA/AB/AC/AD/B/BA/BB/BC/BD/C/CA/CB/CC/CD/D/DA/DB/DC/DD/E/EA/EB/EC/ED/F/FA/FB/FC/FD=1-258"/>
</dbReference>
<dbReference type="PDB" id="6ZW7">
    <property type="method" value="EM"/>
    <property type="resolution" value="9.40 A"/>
    <property type="chains" value="A/AA/AB/AC/AD/B/BA/BB/BC/BD/C/CA/CB/CC/CD/D/DA/DB/DC/DD/E/EA/EB/EC/ED/F/FA/FB/FC/FD=1-258"/>
</dbReference>
<dbReference type="PDB" id="8QBR">
    <property type="method" value="EM"/>
    <property type="resolution" value="3.74 A"/>
    <property type="chains" value="A=1-214"/>
</dbReference>
<dbReference type="PDB" id="8QBS">
    <property type="method" value="EM"/>
    <property type="resolution" value="3.67 A"/>
    <property type="chains" value="A=1-258"/>
</dbReference>
<dbReference type="PDB" id="8QBV">
    <property type="method" value="EM"/>
    <property type="resolution" value="3.78 A"/>
    <property type="chains" value="A=1-217"/>
</dbReference>
<dbReference type="PDB" id="8QBW">
    <property type="method" value="EM"/>
    <property type="resolution" value="3.67 A"/>
    <property type="chains" value="A=1-219"/>
</dbReference>
<dbReference type="PDBsum" id="6ZVR"/>
<dbReference type="PDBsum" id="6ZVS"/>
<dbReference type="PDBsum" id="6ZVT"/>
<dbReference type="PDBsum" id="6ZW4"/>
<dbReference type="PDBsum" id="6ZW5"/>
<dbReference type="PDBsum" id="6ZW6"/>
<dbReference type="PDBsum" id="6ZW7"/>
<dbReference type="PDBsum" id="8QBR"/>
<dbReference type="PDBsum" id="8QBS"/>
<dbReference type="PDBsum" id="8QBV"/>
<dbReference type="PDBsum" id="8QBW"/>
<dbReference type="EMDB" id="EMD-11468"/>
<dbReference type="EMDB" id="EMD-11469"/>
<dbReference type="EMDB" id="EMD-11470"/>
<dbReference type="EMDB" id="EMD-11478"/>
<dbReference type="EMDB" id="EMD-11481"/>
<dbReference type="EMDB" id="EMD-11482"/>
<dbReference type="EMDB" id="EMD-11483"/>
<dbReference type="EMDB" id="EMD-18318"/>
<dbReference type="EMDB" id="EMD-18319"/>
<dbReference type="EMDB" id="EMD-18321"/>
<dbReference type="EMDB" id="EMD-18322"/>
<dbReference type="SMR" id="B2J6D9"/>
<dbReference type="STRING" id="63737.Npun_R3963"/>
<dbReference type="EnsemblBacteria" id="ACC82344">
    <property type="protein sequence ID" value="ACC82344"/>
    <property type="gene ID" value="Npun_R3963"/>
</dbReference>
<dbReference type="KEGG" id="npu:Npun_R3963"/>
<dbReference type="eggNOG" id="COG1842">
    <property type="taxonomic scope" value="Bacteria"/>
</dbReference>
<dbReference type="HOGENOM" id="CLU_056466_3_2_3"/>
<dbReference type="OrthoDB" id="9779630at2"/>
<dbReference type="PhylomeDB" id="B2J6D9"/>
<dbReference type="Proteomes" id="UP000001191">
    <property type="component" value="Chromosome"/>
</dbReference>
<dbReference type="GO" id="GO:0005886">
    <property type="term" value="C:plasma membrane"/>
    <property type="evidence" value="ECO:0007669"/>
    <property type="project" value="UniProtKB-SubCell"/>
</dbReference>
<dbReference type="GO" id="GO:0008289">
    <property type="term" value="F:lipid binding"/>
    <property type="evidence" value="ECO:0007669"/>
    <property type="project" value="UniProtKB-KW"/>
</dbReference>
<dbReference type="InterPro" id="IPR007157">
    <property type="entry name" value="PspA_VIPP1"/>
</dbReference>
<dbReference type="PANTHER" id="PTHR31088">
    <property type="entry name" value="MEMBRANE-ASSOCIATED PROTEIN VIPP1, CHLOROPLASTIC"/>
    <property type="match status" value="1"/>
</dbReference>
<dbReference type="PANTHER" id="PTHR31088:SF6">
    <property type="entry name" value="PHAGE SHOCK PROTEIN A"/>
    <property type="match status" value="1"/>
</dbReference>
<dbReference type="Pfam" id="PF04012">
    <property type="entry name" value="PspA_IM30"/>
    <property type="match status" value="1"/>
</dbReference>